<gene>
    <name evidence="1" type="primary">ruvC</name>
    <name type="ordered locus">Cagg_2595</name>
</gene>
<reference key="1">
    <citation type="submission" date="2008-12" db="EMBL/GenBank/DDBJ databases">
        <title>Complete sequence of Chloroflexus aggregans DSM 9485.</title>
        <authorList>
            <consortium name="US DOE Joint Genome Institute"/>
            <person name="Lucas S."/>
            <person name="Copeland A."/>
            <person name="Lapidus A."/>
            <person name="Glavina del Rio T."/>
            <person name="Dalin E."/>
            <person name="Tice H."/>
            <person name="Pitluck S."/>
            <person name="Foster B."/>
            <person name="Larimer F."/>
            <person name="Land M."/>
            <person name="Hauser L."/>
            <person name="Kyrpides N."/>
            <person name="Mikhailova N."/>
            <person name="Bryant D.A."/>
            <person name="Richardson P."/>
        </authorList>
    </citation>
    <scope>NUCLEOTIDE SEQUENCE [LARGE SCALE GENOMIC DNA]</scope>
    <source>
        <strain>MD-66 / DSM 9485</strain>
    </source>
</reference>
<sequence length="164" mass="17300">MRALGIDPGTATMGWGVVERDGGVLRLVDVGALTTPAGMPQPERLLQLYNGLRAIIERLQPDTAAVEELFFGKNVNTALTVGQARGVALLALAQAGIPVYEYKPTAVKQAVAGYGGADKRQMQEMVRLTLGLATVPRPDDAADALAIAICHAYTAPTLQRFGVS</sequence>
<feature type="chain" id="PRO_1000195243" description="Crossover junction endodeoxyribonuclease RuvC">
    <location>
        <begin position="1"/>
        <end position="164"/>
    </location>
</feature>
<feature type="active site" evidence="1">
    <location>
        <position position="7"/>
    </location>
</feature>
<feature type="active site" evidence="1">
    <location>
        <position position="67"/>
    </location>
</feature>
<feature type="active site" evidence="1">
    <location>
        <position position="140"/>
    </location>
</feature>
<feature type="binding site" evidence="1">
    <location>
        <position position="7"/>
    </location>
    <ligand>
        <name>Mg(2+)</name>
        <dbReference type="ChEBI" id="CHEBI:18420"/>
        <label>1</label>
    </ligand>
</feature>
<feature type="binding site" evidence="1">
    <location>
        <position position="67"/>
    </location>
    <ligand>
        <name>Mg(2+)</name>
        <dbReference type="ChEBI" id="CHEBI:18420"/>
        <label>2</label>
    </ligand>
</feature>
<feature type="binding site" evidence="1">
    <location>
        <position position="140"/>
    </location>
    <ligand>
        <name>Mg(2+)</name>
        <dbReference type="ChEBI" id="CHEBI:18420"/>
        <label>1</label>
    </ligand>
</feature>
<proteinExistence type="inferred from homology"/>
<accession>B8G4I8</accession>
<protein>
    <recommendedName>
        <fullName evidence="1">Crossover junction endodeoxyribonuclease RuvC</fullName>
        <ecNumber evidence="1">3.1.21.10</ecNumber>
    </recommendedName>
    <alternativeName>
        <fullName evidence="1">Holliday junction nuclease RuvC</fullName>
    </alternativeName>
    <alternativeName>
        <fullName evidence="1">Holliday junction resolvase RuvC</fullName>
    </alternativeName>
</protein>
<organism>
    <name type="scientific">Chloroflexus aggregans (strain MD-66 / DSM 9485)</name>
    <dbReference type="NCBI Taxonomy" id="326427"/>
    <lineage>
        <taxon>Bacteria</taxon>
        <taxon>Bacillati</taxon>
        <taxon>Chloroflexota</taxon>
        <taxon>Chloroflexia</taxon>
        <taxon>Chloroflexales</taxon>
        <taxon>Chloroflexineae</taxon>
        <taxon>Chloroflexaceae</taxon>
        <taxon>Chloroflexus</taxon>
    </lineage>
</organism>
<name>RUVC_CHLAD</name>
<comment type="function">
    <text evidence="1">The RuvA-RuvB-RuvC complex processes Holliday junction (HJ) DNA during genetic recombination and DNA repair. Endonuclease that resolves HJ intermediates. Cleaves cruciform DNA by making single-stranded nicks across the HJ at symmetrical positions within the homologous arms, yielding a 5'-phosphate and a 3'-hydroxyl group; requires a central core of homology in the junction. The consensus cleavage sequence is 5'-(A/T)TT(C/G)-3'. Cleavage occurs on the 3'-side of the TT dinucleotide at the point of strand exchange. HJ branch migration catalyzed by RuvA-RuvB allows RuvC to scan DNA until it finds its consensus sequence, where it cleaves and resolves the cruciform DNA.</text>
</comment>
<comment type="catalytic activity">
    <reaction evidence="1">
        <text>Endonucleolytic cleavage at a junction such as a reciprocal single-stranded crossover between two homologous DNA duplexes (Holliday junction).</text>
        <dbReference type="EC" id="3.1.21.10"/>
    </reaction>
</comment>
<comment type="cofactor">
    <cofactor evidence="1">
        <name>Mg(2+)</name>
        <dbReference type="ChEBI" id="CHEBI:18420"/>
    </cofactor>
    <text evidence="1">Binds 2 Mg(2+) ion per subunit.</text>
</comment>
<comment type="subunit">
    <text evidence="1">Homodimer which binds Holliday junction (HJ) DNA. The HJ becomes 2-fold symmetrical on binding to RuvC with unstacked arms; it has a different conformation from HJ DNA in complex with RuvA. In the full resolvosome a probable DNA-RuvA(4)-RuvB(12)-RuvC(2) complex forms which resolves the HJ.</text>
</comment>
<comment type="subcellular location">
    <subcellularLocation>
        <location evidence="1">Cytoplasm</location>
    </subcellularLocation>
</comment>
<comment type="similarity">
    <text evidence="1">Belongs to the RuvC family.</text>
</comment>
<dbReference type="EC" id="3.1.21.10" evidence="1"/>
<dbReference type="EMBL" id="CP001337">
    <property type="protein sequence ID" value="ACL25464.1"/>
    <property type="molecule type" value="Genomic_DNA"/>
</dbReference>
<dbReference type="SMR" id="B8G4I8"/>
<dbReference type="STRING" id="326427.Cagg_2595"/>
<dbReference type="KEGG" id="cag:Cagg_2595"/>
<dbReference type="eggNOG" id="COG0817">
    <property type="taxonomic scope" value="Bacteria"/>
</dbReference>
<dbReference type="HOGENOM" id="CLU_091257_3_1_0"/>
<dbReference type="OrthoDB" id="9805499at2"/>
<dbReference type="Proteomes" id="UP000002508">
    <property type="component" value="Chromosome"/>
</dbReference>
<dbReference type="GO" id="GO:0005737">
    <property type="term" value="C:cytoplasm"/>
    <property type="evidence" value="ECO:0007669"/>
    <property type="project" value="UniProtKB-SubCell"/>
</dbReference>
<dbReference type="GO" id="GO:0048476">
    <property type="term" value="C:Holliday junction resolvase complex"/>
    <property type="evidence" value="ECO:0007669"/>
    <property type="project" value="UniProtKB-UniRule"/>
</dbReference>
<dbReference type="GO" id="GO:0008821">
    <property type="term" value="F:crossover junction DNA endonuclease activity"/>
    <property type="evidence" value="ECO:0007669"/>
    <property type="project" value="UniProtKB-UniRule"/>
</dbReference>
<dbReference type="GO" id="GO:0003677">
    <property type="term" value="F:DNA binding"/>
    <property type="evidence" value="ECO:0007669"/>
    <property type="project" value="UniProtKB-KW"/>
</dbReference>
<dbReference type="GO" id="GO:0000287">
    <property type="term" value="F:magnesium ion binding"/>
    <property type="evidence" value="ECO:0007669"/>
    <property type="project" value="UniProtKB-UniRule"/>
</dbReference>
<dbReference type="GO" id="GO:0006310">
    <property type="term" value="P:DNA recombination"/>
    <property type="evidence" value="ECO:0007669"/>
    <property type="project" value="UniProtKB-UniRule"/>
</dbReference>
<dbReference type="GO" id="GO:0006281">
    <property type="term" value="P:DNA repair"/>
    <property type="evidence" value="ECO:0007669"/>
    <property type="project" value="UniProtKB-UniRule"/>
</dbReference>
<dbReference type="CDD" id="cd16962">
    <property type="entry name" value="RuvC"/>
    <property type="match status" value="1"/>
</dbReference>
<dbReference type="FunFam" id="3.30.420.10:FF:000002">
    <property type="entry name" value="Crossover junction endodeoxyribonuclease RuvC"/>
    <property type="match status" value="1"/>
</dbReference>
<dbReference type="Gene3D" id="3.30.420.10">
    <property type="entry name" value="Ribonuclease H-like superfamily/Ribonuclease H"/>
    <property type="match status" value="1"/>
</dbReference>
<dbReference type="HAMAP" id="MF_00034">
    <property type="entry name" value="RuvC"/>
    <property type="match status" value="1"/>
</dbReference>
<dbReference type="InterPro" id="IPR012337">
    <property type="entry name" value="RNaseH-like_sf"/>
</dbReference>
<dbReference type="InterPro" id="IPR036397">
    <property type="entry name" value="RNaseH_sf"/>
</dbReference>
<dbReference type="InterPro" id="IPR020563">
    <property type="entry name" value="X-over_junc_endoDNase_Mg_BS"/>
</dbReference>
<dbReference type="InterPro" id="IPR002176">
    <property type="entry name" value="X-over_junc_endoDNase_RuvC"/>
</dbReference>
<dbReference type="NCBIfam" id="NF000711">
    <property type="entry name" value="PRK00039.2-1"/>
    <property type="match status" value="1"/>
</dbReference>
<dbReference type="NCBIfam" id="TIGR00228">
    <property type="entry name" value="ruvC"/>
    <property type="match status" value="1"/>
</dbReference>
<dbReference type="PANTHER" id="PTHR30194">
    <property type="entry name" value="CROSSOVER JUNCTION ENDODEOXYRIBONUCLEASE RUVC"/>
    <property type="match status" value="1"/>
</dbReference>
<dbReference type="PANTHER" id="PTHR30194:SF3">
    <property type="entry name" value="CROSSOVER JUNCTION ENDODEOXYRIBONUCLEASE RUVC"/>
    <property type="match status" value="1"/>
</dbReference>
<dbReference type="Pfam" id="PF02075">
    <property type="entry name" value="RuvC"/>
    <property type="match status" value="1"/>
</dbReference>
<dbReference type="PRINTS" id="PR00696">
    <property type="entry name" value="RSOLVASERUVC"/>
</dbReference>
<dbReference type="SUPFAM" id="SSF53098">
    <property type="entry name" value="Ribonuclease H-like"/>
    <property type="match status" value="1"/>
</dbReference>
<dbReference type="PROSITE" id="PS01321">
    <property type="entry name" value="RUVC"/>
    <property type="match status" value="1"/>
</dbReference>
<keyword id="KW-0963">Cytoplasm</keyword>
<keyword id="KW-0227">DNA damage</keyword>
<keyword id="KW-0233">DNA recombination</keyword>
<keyword id="KW-0234">DNA repair</keyword>
<keyword id="KW-0238">DNA-binding</keyword>
<keyword id="KW-0255">Endonuclease</keyword>
<keyword id="KW-0378">Hydrolase</keyword>
<keyword id="KW-0460">Magnesium</keyword>
<keyword id="KW-0479">Metal-binding</keyword>
<keyword id="KW-0540">Nuclease</keyword>
<evidence type="ECO:0000255" key="1">
    <source>
        <dbReference type="HAMAP-Rule" id="MF_00034"/>
    </source>
</evidence>